<reference key="1">
    <citation type="journal article" date="2002" name="Eukaryot. Cell">
        <title>Evolutionary analyses of ABC transporters of Dictyostelium discoideum.</title>
        <authorList>
            <person name="Anjard C."/>
            <person name="Loomis W.F."/>
        </authorList>
    </citation>
    <scope>NUCLEOTIDE SEQUENCE [GENOMIC DNA]</scope>
    <scope>NOMENCLATURE</scope>
    <source>
        <strain>AX4</strain>
    </source>
</reference>
<reference key="2">
    <citation type="journal article" date="2002" name="Nature">
        <title>Sequence and analysis of chromosome 2 of Dictyostelium discoideum.</title>
        <authorList>
            <person name="Gloeckner G."/>
            <person name="Eichinger L."/>
            <person name="Szafranski K."/>
            <person name="Pachebat J.A."/>
            <person name="Bankier A.T."/>
            <person name="Dear P.H."/>
            <person name="Lehmann R."/>
            <person name="Baumgart C."/>
            <person name="Parra G."/>
            <person name="Abril J.F."/>
            <person name="Guigo R."/>
            <person name="Kumpf K."/>
            <person name="Tunggal B."/>
            <person name="Cox E.C."/>
            <person name="Quail M.A."/>
            <person name="Platzer M."/>
            <person name="Rosenthal A."/>
            <person name="Noegel A.A."/>
        </authorList>
    </citation>
    <scope>NUCLEOTIDE SEQUENCE [LARGE SCALE GENOMIC DNA]</scope>
    <source>
        <strain>AX4</strain>
    </source>
</reference>
<reference key="3">
    <citation type="journal article" date="2005" name="Nature">
        <title>The genome of the social amoeba Dictyostelium discoideum.</title>
        <authorList>
            <person name="Eichinger L."/>
            <person name="Pachebat J.A."/>
            <person name="Gloeckner G."/>
            <person name="Rajandream M.A."/>
            <person name="Sucgang R."/>
            <person name="Berriman M."/>
            <person name="Song J."/>
            <person name="Olsen R."/>
            <person name="Szafranski K."/>
            <person name="Xu Q."/>
            <person name="Tunggal B."/>
            <person name="Kummerfeld S."/>
            <person name="Madera M."/>
            <person name="Konfortov B.A."/>
            <person name="Rivero F."/>
            <person name="Bankier A.T."/>
            <person name="Lehmann R."/>
            <person name="Hamlin N."/>
            <person name="Davies R."/>
            <person name="Gaudet P."/>
            <person name="Fey P."/>
            <person name="Pilcher K."/>
            <person name="Chen G."/>
            <person name="Saunders D."/>
            <person name="Sodergren E.J."/>
            <person name="Davis P."/>
            <person name="Kerhornou A."/>
            <person name="Nie X."/>
            <person name="Hall N."/>
            <person name="Anjard C."/>
            <person name="Hemphill L."/>
            <person name="Bason N."/>
            <person name="Farbrother P."/>
            <person name="Desany B."/>
            <person name="Just E."/>
            <person name="Morio T."/>
            <person name="Rost R."/>
            <person name="Churcher C.M."/>
            <person name="Cooper J."/>
            <person name="Haydock S."/>
            <person name="van Driessche N."/>
            <person name="Cronin A."/>
            <person name="Goodhead I."/>
            <person name="Muzny D.M."/>
            <person name="Mourier T."/>
            <person name="Pain A."/>
            <person name="Lu M."/>
            <person name="Harper D."/>
            <person name="Lindsay R."/>
            <person name="Hauser H."/>
            <person name="James K.D."/>
            <person name="Quiles M."/>
            <person name="Madan Babu M."/>
            <person name="Saito T."/>
            <person name="Buchrieser C."/>
            <person name="Wardroper A."/>
            <person name="Felder M."/>
            <person name="Thangavelu M."/>
            <person name="Johnson D."/>
            <person name="Knights A."/>
            <person name="Loulseged H."/>
            <person name="Mungall K.L."/>
            <person name="Oliver K."/>
            <person name="Price C."/>
            <person name="Quail M.A."/>
            <person name="Urushihara H."/>
            <person name="Hernandez J."/>
            <person name="Rabbinowitsch E."/>
            <person name="Steffen D."/>
            <person name="Sanders M."/>
            <person name="Ma J."/>
            <person name="Kohara Y."/>
            <person name="Sharp S."/>
            <person name="Simmonds M.N."/>
            <person name="Spiegler S."/>
            <person name="Tivey A."/>
            <person name="Sugano S."/>
            <person name="White B."/>
            <person name="Walker D."/>
            <person name="Woodward J.R."/>
            <person name="Winckler T."/>
            <person name="Tanaka Y."/>
            <person name="Shaulsky G."/>
            <person name="Schleicher M."/>
            <person name="Weinstock G.M."/>
            <person name="Rosenthal A."/>
            <person name="Cox E.C."/>
            <person name="Chisholm R.L."/>
            <person name="Gibbs R.A."/>
            <person name="Loomis W.F."/>
            <person name="Platzer M."/>
            <person name="Kay R.R."/>
            <person name="Williams J.G."/>
            <person name="Dear P.H."/>
            <person name="Noegel A.A."/>
            <person name="Barrell B.G."/>
            <person name="Kuspa A."/>
        </authorList>
    </citation>
    <scope>NUCLEOTIDE SEQUENCE [LARGE SCALE GENOMIC DNA]</scope>
    <source>
        <strain>AX4</strain>
    </source>
</reference>
<sequence>MESIKNQLIPLLKKNWTLKGKSKIKLLLEILLPLISIGILFGILYLSMIITRDFKERPASGFAFDIAHTKQLLIGSNGGLNSDQRNILDNLKLQVSIQHPEFSNDYINRCFVEFKDIESMDEYFHDPFNYRGVMGGVWFPDDSFNGNTIKYSIRVDSDFTHDNTQQFQDREDSQIYLRHYFTQIQTGVDQAILLTNQIAIPIFATGQRFPNPYISFWEKWTDGRKLILLNTGGVFITASLFATLFTLITNIVIEKETKILEGMKTMGLNSFAYYISNSIISLITLLSSTLLVSIILSASQLVHHVKWITLILILIPYSITLLLIAFILCKFFTKSKYAGLMAFLIVLLLSGIGIIIGRFNISPTLKLLSCLFSPIAISVANYVWCYKDLIVFKEVDINVNMVNEYEIIGMLVFDIFLYILILWYLDNVITGEYGIPKKWYFFLTKNYWRKNKKSNINNNGVFDVEATSCNRNSSYNEKNFEKIEHQLERPTISIRNLRKEFKTGDGNRIAVNDLSIDMYKNRIHSFLGPNGSGKSTTLSMLTGMIEPTSGDALINGFDIRNNIDEIRKHLGVCPQSDIIWEQLTVMEHLEFYAALKGFTNSNQRKVEATKIALEVGLGEKLNAPAGTLSGGQKRKLCLAIAFIGPNSDIILIDEPTSGLDASNRRLIWDFILKYRENKTIILVSHYLEECDILSNTISIIANGELKCNGSSLFLKNRFGVGYLLTISKEHNSINNSNLTKTISDIIFNHIPKGSLLSDAGTELCFRLPNESIGNFSNLFKELDDRKKQLSIENYGISITTLEEVFLKIISNSETNPNFNQSVLNTALKTNSSGIKSYQQLKGLLIKRVKTSRKDIKSFVLSILIPILILAGGLILYKNMRTIDIYNTVTQPLILDFNVYGKSVTPVSIDKVNETMTSLFDNSIGHSDRTTLVPYDELHDYLIHHYFGVPGALYFDFRYFKNVKFLHYNVFFNKDYLHALPIYINFVDSEILRSVTGKRIQTTSLPFEHIQSPLEVASLDVNFVAIVFFIILTLASFSLIAASHAGNISHERSTRVKRLLYISGLRKSIYWLSNLIWDYLQTFILVIFLTIVIIAVDDKFRTHFDLYISGVVLFTFSIIPLSYLMSFKFSSHGKAVGAIFAIHFGVGLIFTVISFILRVWAIKENSISFQFLTDIIEYCFYAISPFFCFSKILAIVTKFPGVSRVDQSFIDYWSFHFGLLPNAILFLHCIVWITWILLIDYSSEIKGKFTISKLFSNSPIPDSNEDSDVSNERIIVKQLLDNNTNGGSGNVYPIIFNNLYKKFNSVGNYKSKIAVYNSTLAIPTGQTFGLLGLNGCGKSTTLGMISGEISPTGGKIKLNGYDLIKNRNDALTSIGYCFQFDALIGLLSAREQLELYCRIKGVDESKIKDTVNAFIQMMDLESISNSNTSGYSGGNKRKVSLSIACIGSPSILLLDEISCGVDACVKRFMWNVLMELKKNKAIILTTHSIAECQAVCDKLTIMKDGKLQALGSNQHIKDKFGSGYSIEVKFKKEYLENGVELFLQSFPSASLIDNQHALSASFELPNPPNNPIKLSSIFSNIEQSLKFILDDYSVSQTSIEQIFIKLTKNSITNIDN</sequence>
<name>ABCA4_DICDI</name>
<evidence type="ECO:0000255" key="1"/>
<evidence type="ECO:0000255" key="2">
    <source>
        <dbReference type="PROSITE-ProRule" id="PRU00434"/>
    </source>
</evidence>
<evidence type="ECO:0000305" key="3"/>
<keyword id="KW-0067">ATP-binding</keyword>
<keyword id="KW-0472">Membrane</keyword>
<keyword id="KW-0547">Nucleotide-binding</keyword>
<keyword id="KW-1185">Reference proteome</keyword>
<keyword id="KW-0677">Repeat</keyword>
<keyword id="KW-0812">Transmembrane</keyword>
<keyword id="KW-1133">Transmembrane helix</keyword>
<keyword id="KW-0813">Transport</keyword>
<protein>
    <recommendedName>
        <fullName>ABC transporter A family member 4</fullName>
    </recommendedName>
    <alternativeName>
        <fullName>ABC transporter ABCA.4</fullName>
    </alternativeName>
</protein>
<gene>
    <name type="primary">abcA4</name>
    <name type="ORF">DDB_G0274121</name>
</gene>
<proteinExistence type="inferred from homology"/>
<comment type="subcellular location">
    <subcellularLocation>
        <location evidence="3">Membrane</location>
        <topology evidence="3">Multi-pass membrane protein</topology>
    </subcellularLocation>
</comment>
<comment type="similarity">
    <text evidence="3">Belongs to the ABC transporter superfamily. ABCA family.</text>
</comment>
<accession>Q555Z5</accession>
<accession>Q86IX7</accession>
<accession>Q8T6J3</accession>
<feature type="chain" id="PRO_0000363836" description="ABC transporter A family member 4">
    <location>
        <begin position="1"/>
        <end position="1615"/>
    </location>
</feature>
<feature type="transmembrane region" description="Helical" evidence="1">
    <location>
        <begin position="30"/>
        <end position="50"/>
    </location>
</feature>
<feature type="transmembrane region" description="Helical" evidence="1">
    <location>
        <begin position="233"/>
        <end position="253"/>
    </location>
</feature>
<feature type="transmembrane region" description="Helical" evidence="1">
    <location>
        <begin position="278"/>
        <end position="298"/>
    </location>
</feature>
<feature type="transmembrane region" description="Helical" evidence="1">
    <location>
        <begin position="308"/>
        <end position="328"/>
    </location>
</feature>
<feature type="transmembrane region" description="Helical" evidence="1">
    <location>
        <begin position="337"/>
        <end position="357"/>
    </location>
</feature>
<feature type="transmembrane region" description="Helical" evidence="1">
    <location>
        <begin position="365"/>
        <end position="385"/>
    </location>
</feature>
<feature type="transmembrane region" description="Helical" evidence="1">
    <location>
        <begin position="405"/>
        <end position="425"/>
    </location>
</feature>
<feature type="transmembrane region" description="Helical" evidence="1">
    <location>
        <begin position="855"/>
        <end position="875"/>
    </location>
</feature>
<feature type="transmembrane region" description="Helical" evidence="1">
    <location>
        <begin position="1022"/>
        <end position="1042"/>
    </location>
</feature>
<feature type="transmembrane region" description="Helical" evidence="1">
    <location>
        <begin position="1075"/>
        <end position="1095"/>
    </location>
</feature>
<feature type="transmembrane region" description="Helical" evidence="1">
    <location>
        <begin position="1106"/>
        <end position="1126"/>
    </location>
</feature>
<feature type="transmembrane region" description="Helical" evidence="1">
    <location>
        <begin position="1135"/>
        <end position="1155"/>
    </location>
</feature>
<feature type="transmembrane region" description="Helical" evidence="1">
    <location>
        <begin position="1174"/>
        <end position="1194"/>
    </location>
</feature>
<feature type="transmembrane region" description="Helical" evidence="1">
    <location>
        <begin position="1218"/>
        <end position="1238"/>
    </location>
</feature>
<feature type="domain" description="ABC transmembrane type-2">
    <location>
        <begin position="182"/>
        <end position="383"/>
    </location>
</feature>
<feature type="domain" description="ABC transporter 1" evidence="2">
    <location>
        <begin position="492"/>
        <end position="727"/>
    </location>
</feature>
<feature type="domain" description="ABC transporter 2" evidence="2">
    <location>
        <begin position="1293"/>
        <end position="1528"/>
    </location>
</feature>
<feature type="binding site" evidence="2">
    <location>
        <begin position="528"/>
        <end position="535"/>
    </location>
    <ligand>
        <name>ATP</name>
        <dbReference type="ChEBI" id="CHEBI:30616"/>
        <label>1</label>
    </ligand>
</feature>
<feature type="binding site" evidence="2">
    <location>
        <begin position="1331"/>
        <end position="1338"/>
    </location>
    <ligand>
        <name>ATP</name>
        <dbReference type="ChEBI" id="CHEBI:30616"/>
        <label>2</label>
    </ligand>
</feature>
<feature type="sequence conflict" description="In Ref. 1; AAL85297." evidence="3" ref="1">
    <original>E</original>
    <variation>K</variation>
    <location>
        <position position="29"/>
    </location>
</feature>
<feature type="sequence conflict" description="In Ref. 1; AAL85297." evidence="3" ref="1">
    <original>GILFGILY</original>
    <variation>D</variation>
    <location>
        <begin position="38"/>
        <end position="45"/>
    </location>
</feature>
<feature type="sequence conflict" description="In Ref. 1; AAL85297." evidence="3" ref="1">
    <original>I</original>
    <variation>N</variation>
    <location>
        <position position="66"/>
    </location>
</feature>
<organism>
    <name type="scientific">Dictyostelium discoideum</name>
    <name type="common">Social amoeba</name>
    <dbReference type="NCBI Taxonomy" id="44689"/>
    <lineage>
        <taxon>Eukaryota</taxon>
        <taxon>Amoebozoa</taxon>
        <taxon>Evosea</taxon>
        <taxon>Eumycetozoa</taxon>
        <taxon>Dictyostelia</taxon>
        <taxon>Dictyosteliales</taxon>
        <taxon>Dictyosteliaceae</taxon>
        <taxon>Dictyostelium</taxon>
    </lineage>
</organism>
<dbReference type="EMBL" id="AF465306">
    <property type="protein sequence ID" value="AAL85297.1"/>
    <property type="molecule type" value="Genomic_DNA"/>
</dbReference>
<dbReference type="EMBL" id="AAFI02000012">
    <property type="protein sequence ID" value="EAL69953.1"/>
    <property type="molecule type" value="Genomic_DNA"/>
</dbReference>
<dbReference type="RefSeq" id="XP_643915.1">
    <property type="nucleotide sequence ID" value="XM_638823.1"/>
</dbReference>
<dbReference type="SMR" id="Q555Z5"/>
<dbReference type="FunCoup" id="Q555Z5">
    <property type="interactions" value="149"/>
</dbReference>
<dbReference type="STRING" id="44689.Q555Z5"/>
<dbReference type="PaxDb" id="44689-DDB0219982"/>
<dbReference type="EnsemblProtists" id="EAL69953">
    <property type="protein sequence ID" value="EAL69953"/>
    <property type="gene ID" value="DDB_G0274121"/>
</dbReference>
<dbReference type="GeneID" id="8619342"/>
<dbReference type="KEGG" id="ddi:DDB_G0274121"/>
<dbReference type="dictyBase" id="DDB_G0274121">
    <property type="gene designation" value="abcA4"/>
</dbReference>
<dbReference type="VEuPathDB" id="AmoebaDB:DDB_G0274121"/>
<dbReference type="eggNOG" id="KOG0059">
    <property type="taxonomic scope" value="Eukaryota"/>
</dbReference>
<dbReference type="HOGENOM" id="CLU_000604_19_1_1"/>
<dbReference type="InParanoid" id="Q555Z5"/>
<dbReference type="OMA" id="AWQDYIS"/>
<dbReference type="PhylomeDB" id="Q555Z5"/>
<dbReference type="Reactome" id="R-DDI-1369062">
    <property type="pathway name" value="ABC transporters in lipid homeostasis"/>
</dbReference>
<dbReference type="Reactome" id="R-DDI-2453902">
    <property type="pathway name" value="The canonical retinoid cycle in rods (twilight vision)"/>
</dbReference>
<dbReference type="Reactome" id="R-DDI-382556">
    <property type="pathway name" value="ABC-family proteins mediated transport"/>
</dbReference>
<dbReference type="Reactome" id="R-DDI-5683826">
    <property type="pathway name" value="Surfactant metabolism"/>
</dbReference>
<dbReference type="Reactome" id="R-DDI-6798695">
    <property type="pathway name" value="Neutrophil degranulation"/>
</dbReference>
<dbReference type="Reactome" id="R-DDI-8963896">
    <property type="pathway name" value="HDL assembly"/>
</dbReference>
<dbReference type="PRO" id="PR:Q555Z5"/>
<dbReference type="Proteomes" id="UP000002195">
    <property type="component" value="Chromosome 2"/>
</dbReference>
<dbReference type="GO" id="GO:0043231">
    <property type="term" value="C:intracellular membrane-bounded organelle"/>
    <property type="evidence" value="ECO:0000318"/>
    <property type="project" value="GO_Central"/>
</dbReference>
<dbReference type="GO" id="GO:0016020">
    <property type="term" value="C:membrane"/>
    <property type="evidence" value="ECO:0007669"/>
    <property type="project" value="UniProtKB-SubCell"/>
</dbReference>
<dbReference type="GO" id="GO:0140359">
    <property type="term" value="F:ABC-type transporter activity"/>
    <property type="evidence" value="ECO:0007669"/>
    <property type="project" value="InterPro"/>
</dbReference>
<dbReference type="GO" id="GO:0005524">
    <property type="term" value="F:ATP binding"/>
    <property type="evidence" value="ECO:0007669"/>
    <property type="project" value="UniProtKB-KW"/>
</dbReference>
<dbReference type="GO" id="GO:0016887">
    <property type="term" value="F:ATP hydrolysis activity"/>
    <property type="evidence" value="ECO:0007669"/>
    <property type="project" value="InterPro"/>
</dbReference>
<dbReference type="GO" id="GO:0042626">
    <property type="term" value="F:ATPase-coupled transmembrane transporter activity"/>
    <property type="evidence" value="ECO:0000318"/>
    <property type="project" value="GO_Central"/>
</dbReference>
<dbReference type="GO" id="GO:0005319">
    <property type="term" value="F:lipid transporter activity"/>
    <property type="evidence" value="ECO:0000318"/>
    <property type="project" value="GO_Central"/>
</dbReference>
<dbReference type="GO" id="GO:0006869">
    <property type="term" value="P:lipid transport"/>
    <property type="evidence" value="ECO:0000318"/>
    <property type="project" value="GO_Central"/>
</dbReference>
<dbReference type="GO" id="GO:0031288">
    <property type="term" value="P:sorocarp morphogenesis"/>
    <property type="evidence" value="ECO:0000315"/>
    <property type="project" value="dictyBase"/>
</dbReference>
<dbReference type="CDD" id="cd03263">
    <property type="entry name" value="ABC_subfamily_A"/>
    <property type="match status" value="2"/>
</dbReference>
<dbReference type="FunFam" id="3.40.50.300:FF:002530">
    <property type="entry name" value="ABC transporter A family member 5"/>
    <property type="match status" value="1"/>
</dbReference>
<dbReference type="FunFam" id="3.40.50.300:FF:000298">
    <property type="entry name" value="ATP-binding cassette sub-family A member 12"/>
    <property type="match status" value="1"/>
</dbReference>
<dbReference type="Gene3D" id="3.40.50.300">
    <property type="entry name" value="P-loop containing nucleotide triphosphate hydrolases"/>
    <property type="match status" value="2"/>
</dbReference>
<dbReference type="InterPro" id="IPR003593">
    <property type="entry name" value="AAA+_ATPase"/>
</dbReference>
<dbReference type="InterPro" id="IPR013525">
    <property type="entry name" value="ABC2_TM"/>
</dbReference>
<dbReference type="InterPro" id="IPR003439">
    <property type="entry name" value="ABC_transporter-like_ATP-bd"/>
</dbReference>
<dbReference type="InterPro" id="IPR017871">
    <property type="entry name" value="ABC_transporter-like_CS"/>
</dbReference>
<dbReference type="InterPro" id="IPR026082">
    <property type="entry name" value="ABCA"/>
</dbReference>
<dbReference type="InterPro" id="IPR027417">
    <property type="entry name" value="P-loop_NTPase"/>
</dbReference>
<dbReference type="PANTHER" id="PTHR19229:SF250">
    <property type="entry name" value="ABC TRANSPORTER DOMAIN-CONTAINING PROTEIN-RELATED"/>
    <property type="match status" value="1"/>
</dbReference>
<dbReference type="PANTHER" id="PTHR19229">
    <property type="entry name" value="ATP-BINDING CASSETTE TRANSPORTER SUBFAMILY A ABCA"/>
    <property type="match status" value="1"/>
</dbReference>
<dbReference type="Pfam" id="PF12698">
    <property type="entry name" value="ABC2_membrane_3"/>
    <property type="match status" value="2"/>
</dbReference>
<dbReference type="Pfam" id="PF00005">
    <property type="entry name" value="ABC_tran"/>
    <property type="match status" value="2"/>
</dbReference>
<dbReference type="SMART" id="SM00382">
    <property type="entry name" value="AAA"/>
    <property type="match status" value="2"/>
</dbReference>
<dbReference type="SUPFAM" id="SSF52540">
    <property type="entry name" value="P-loop containing nucleoside triphosphate hydrolases"/>
    <property type="match status" value="2"/>
</dbReference>
<dbReference type="PROSITE" id="PS00211">
    <property type="entry name" value="ABC_TRANSPORTER_1"/>
    <property type="match status" value="1"/>
</dbReference>
<dbReference type="PROSITE" id="PS50893">
    <property type="entry name" value="ABC_TRANSPORTER_2"/>
    <property type="match status" value="2"/>
</dbReference>